<evidence type="ECO:0000250" key="1"/>
<evidence type="ECO:0000255" key="2">
    <source>
        <dbReference type="HAMAP-Rule" id="MF_00403"/>
    </source>
</evidence>
<evidence type="ECO:0000256" key="3">
    <source>
        <dbReference type="SAM" id="MobiDB-lite"/>
    </source>
</evidence>
<evidence type="ECO:0000305" key="4"/>
<dbReference type="EMBL" id="CP001227">
    <property type="protein sequence ID" value="ACR47498.1"/>
    <property type="molecule type" value="Genomic_DNA"/>
</dbReference>
<dbReference type="RefSeq" id="WP_012736731.1">
    <property type="nucleotide sequence ID" value="NC_012730.1"/>
</dbReference>
<dbReference type="SMR" id="C4K1P8"/>
<dbReference type="KEGG" id="rpk:RPR_04000"/>
<dbReference type="HOGENOM" id="CLU_104295_1_3_5"/>
<dbReference type="Proteomes" id="UP000005015">
    <property type="component" value="Chromosome"/>
</dbReference>
<dbReference type="GO" id="GO:0015935">
    <property type="term" value="C:small ribosomal subunit"/>
    <property type="evidence" value="ECO:0007669"/>
    <property type="project" value="InterPro"/>
</dbReference>
<dbReference type="GO" id="GO:0019843">
    <property type="term" value="F:rRNA binding"/>
    <property type="evidence" value="ECO:0007669"/>
    <property type="project" value="UniProtKB-UniRule"/>
</dbReference>
<dbReference type="GO" id="GO:0003735">
    <property type="term" value="F:structural constituent of ribosome"/>
    <property type="evidence" value="ECO:0007669"/>
    <property type="project" value="InterPro"/>
</dbReference>
<dbReference type="GO" id="GO:0000049">
    <property type="term" value="F:tRNA binding"/>
    <property type="evidence" value="ECO:0007669"/>
    <property type="project" value="UniProtKB-UniRule"/>
</dbReference>
<dbReference type="GO" id="GO:0006412">
    <property type="term" value="P:translation"/>
    <property type="evidence" value="ECO:0007669"/>
    <property type="project" value="UniProtKB-UniRule"/>
</dbReference>
<dbReference type="CDD" id="cd03368">
    <property type="entry name" value="Ribosomal_S12"/>
    <property type="match status" value="1"/>
</dbReference>
<dbReference type="FunFam" id="2.40.50.140:FF:000192">
    <property type="entry name" value="Mitochondrial ribosomal protein S12"/>
    <property type="match status" value="1"/>
</dbReference>
<dbReference type="Gene3D" id="2.40.50.140">
    <property type="entry name" value="Nucleic acid-binding proteins"/>
    <property type="match status" value="1"/>
</dbReference>
<dbReference type="HAMAP" id="MF_00403_B">
    <property type="entry name" value="Ribosomal_uS12_B"/>
    <property type="match status" value="1"/>
</dbReference>
<dbReference type="InterPro" id="IPR012340">
    <property type="entry name" value="NA-bd_OB-fold"/>
</dbReference>
<dbReference type="InterPro" id="IPR006032">
    <property type="entry name" value="Ribosomal_uS12"/>
</dbReference>
<dbReference type="InterPro" id="IPR005679">
    <property type="entry name" value="Ribosomal_uS12_bac"/>
</dbReference>
<dbReference type="NCBIfam" id="TIGR00981">
    <property type="entry name" value="rpsL_bact"/>
    <property type="match status" value="1"/>
</dbReference>
<dbReference type="PANTHER" id="PTHR11652">
    <property type="entry name" value="30S RIBOSOMAL PROTEIN S12 FAMILY MEMBER"/>
    <property type="match status" value="1"/>
</dbReference>
<dbReference type="Pfam" id="PF00164">
    <property type="entry name" value="Ribosom_S12_S23"/>
    <property type="match status" value="1"/>
</dbReference>
<dbReference type="PIRSF" id="PIRSF002133">
    <property type="entry name" value="Ribosomal_S12/S23"/>
    <property type="match status" value="1"/>
</dbReference>
<dbReference type="PRINTS" id="PR01034">
    <property type="entry name" value="RIBOSOMALS12"/>
</dbReference>
<dbReference type="SUPFAM" id="SSF50249">
    <property type="entry name" value="Nucleic acid-binding proteins"/>
    <property type="match status" value="1"/>
</dbReference>
<dbReference type="PROSITE" id="PS00055">
    <property type="entry name" value="RIBOSOMAL_S12"/>
    <property type="match status" value="1"/>
</dbReference>
<proteinExistence type="inferred from homology"/>
<sequence length="129" mass="14321">MPTYNQLVRFGRKSKTRKTKSPALESNPFKSGVCLVVKTVTPKKPNSALRKIATVRLSNKRTVNAYIPGEKHSVKEHDRVLVRGGQVPDLPGVKYHIVLGAYDIAGVKGRKQGRSRYGTPRKQVAVTKK</sequence>
<keyword id="KW-0488">Methylation</keyword>
<keyword id="KW-0687">Ribonucleoprotein</keyword>
<keyword id="KW-0689">Ribosomal protein</keyword>
<keyword id="KW-0694">RNA-binding</keyword>
<keyword id="KW-0699">rRNA-binding</keyword>
<keyword id="KW-0820">tRNA-binding</keyword>
<gene>
    <name evidence="2" type="primary">rpsL</name>
    <name type="ordered locus">RPR_04000</name>
</gene>
<organism>
    <name type="scientific">Rickettsia peacockii (strain Rustic)</name>
    <dbReference type="NCBI Taxonomy" id="562019"/>
    <lineage>
        <taxon>Bacteria</taxon>
        <taxon>Pseudomonadati</taxon>
        <taxon>Pseudomonadota</taxon>
        <taxon>Alphaproteobacteria</taxon>
        <taxon>Rickettsiales</taxon>
        <taxon>Rickettsiaceae</taxon>
        <taxon>Rickettsieae</taxon>
        <taxon>Rickettsia</taxon>
        <taxon>spotted fever group</taxon>
    </lineage>
</organism>
<protein>
    <recommendedName>
        <fullName evidence="2">Small ribosomal subunit protein uS12</fullName>
    </recommendedName>
    <alternativeName>
        <fullName evidence="4">30S ribosomal protein S12</fullName>
    </alternativeName>
</protein>
<feature type="chain" id="PRO_1000205926" description="Small ribosomal subunit protein uS12">
    <location>
        <begin position="1"/>
        <end position="129"/>
    </location>
</feature>
<feature type="region of interest" description="Disordered" evidence="3">
    <location>
        <begin position="1"/>
        <end position="25"/>
    </location>
</feature>
<feature type="region of interest" description="Disordered" evidence="3">
    <location>
        <begin position="109"/>
        <end position="129"/>
    </location>
</feature>
<feature type="compositionally biased region" description="Basic residues" evidence="3">
    <location>
        <begin position="10"/>
        <end position="20"/>
    </location>
</feature>
<feature type="modified residue" description="3-methylthioaspartic acid" evidence="1">
    <location>
        <position position="89"/>
    </location>
</feature>
<comment type="function">
    <text evidence="2">With S4 and S5 plays an important role in translational accuracy.</text>
</comment>
<comment type="function">
    <text evidence="2">Interacts with and stabilizes bases of the 16S rRNA that are involved in tRNA selection in the A site and with the mRNA backbone. Located at the interface of the 30S and 50S subunits, it traverses the body of the 30S subunit contacting proteins on the other side and probably holding the rRNA structure together. The combined cluster of proteins S8, S12 and S17 appears to hold together the shoulder and platform of the 30S subunit.</text>
</comment>
<comment type="subunit">
    <text evidence="2">Part of the 30S ribosomal subunit. Contacts proteins S8 and S17. May interact with IF1 in the 30S initiation complex.</text>
</comment>
<comment type="similarity">
    <text evidence="2">Belongs to the universal ribosomal protein uS12 family.</text>
</comment>
<reference key="1">
    <citation type="journal article" date="2009" name="PLoS ONE">
        <title>Genome sequence of the endosymbiont Rickettsia peacockii and comparison with virulent Rickettsia rickettsii: identification of virulence factors.</title>
        <authorList>
            <person name="Felsheim R.F."/>
            <person name="Kurtti T.J."/>
            <person name="Munderloh U.G."/>
        </authorList>
    </citation>
    <scope>NUCLEOTIDE SEQUENCE [LARGE SCALE GENOMIC DNA]</scope>
    <source>
        <strain>Rustic</strain>
    </source>
</reference>
<name>RS12_RICPU</name>
<accession>C4K1P8</accession>